<evidence type="ECO:0000250" key="1"/>
<evidence type="ECO:0000255" key="2"/>
<evidence type="ECO:0000255" key="3">
    <source>
        <dbReference type="PROSITE-ProRule" id="PRU10037"/>
    </source>
</evidence>
<evidence type="ECO:0000256" key="4">
    <source>
        <dbReference type="SAM" id="MobiDB-lite"/>
    </source>
</evidence>
<evidence type="ECO:0000305" key="5"/>
<sequence length="690" mass="76522">MLRGQEERKYSIRKYSIGVVSVLAATMFVVSSHEAQASEKTPTNAAVQKETLNQPGEQGNAITSHQMQSGKQLDDMHKENGKSGTVTEGKDTLQLSKYQSTQNSKTIRTQNDNQVKQDSERQGSKQSHQNNATNNTERQNDQVQNTHHAERNGSQSTTSQSNDVDKSQPSIPAQKVLPNHDKAAPTSTTPPSNDKTAPKSTKAQDATTDKHPNQQDTHQPAHQIIDAKQDDTVRQSEQKPQVGDLSKHIDGQNSPEKPTDKNTDNKQLIKDALQAPKTRSTTNAAADAKKVRPLKANQVQPLNKYPVVFVHGFLGLVGDNAPALYPNYWGGNKFKVIEELRKQGYNVHQASVSAFGSNYDRAVELYYYIKGGRVDYGAAHAAKYGHERYGKTYKGIMPNWEPGKKVHLVGHSMGGQTIRLMEEFLRNGNKEEIAYHKAHGGEISPLFTGGHNNMVASITTLATPHNGSQAADKFGNTEAVRKIMFALNRFMGNKYSNIDLGLTQWGFKQLPNESYIDYIKRVSKSKIWTSDDNAAYDLTLDGSAKLNNMTSMNPNITYTTYTGVSSHTGPLGYENPDLGTFFLMDTTSRIIGHDAREEWRKNDGVVPVISSLHPSNQPFVNVTNDEPATRRGIWQVKPIIQGWDHVDFIGVDFLDFKRKGAELANFYTGIINDLLRVEATESKGTQLKAS</sequence>
<gene>
    <name type="primary">lip2</name>
    <name type="synonym">geh</name>
    <name type="ordered locus">SAS0297</name>
</gene>
<dbReference type="EC" id="3.1.1.3"/>
<dbReference type="EMBL" id="BX571857">
    <property type="protein sequence ID" value="CAG42068.1"/>
    <property type="molecule type" value="Genomic_DNA"/>
</dbReference>
<dbReference type="RefSeq" id="WP_000943814.1">
    <property type="nucleotide sequence ID" value="NC_002953.3"/>
</dbReference>
<dbReference type="SMR" id="Q6GCF1"/>
<dbReference type="ESTHER" id="staau-lipas">
    <property type="family name" value="Bacterial_lip_FamI.6"/>
</dbReference>
<dbReference type="KEGG" id="sas:SAS0297"/>
<dbReference type="HOGENOM" id="CLU_023555_2_0_9"/>
<dbReference type="GO" id="GO:0005576">
    <property type="term" value="C:extracellular region"/>
    <property type="evidence" value="ECO:0007669"/>
    <property type="project" value="UniProtKB-SubCell"/>
</dbReference>
<dbReference type="GO" id="GO:0046872">
    <property type="term" value="F:metal ion binding"/>
    <property type="evidence" value="ECO:0007669"/>
    <property type="project" value="UniProtKB-KW"/>
</dbReference>
<dbReference type="GO" id="GO:0004806">
    <property type="term" value="F:triacylglycerol lipase activity"/>
    <property type="evidence" value="ECO:0007669"/>
    <property type="project" value="UniProtKB-EC"/>
</dbReference>
<dbReference type="GO" id="GO:0016042">
    <property type="term" value="P:lipid catabolic process"/>
    <property type="evidence" value="ECO:0007669"/>
    <property type="project" value="UniProtKB-KW"/>
</dbReference>
<dbReference type="Gene3D" id="3.40.50.1820">
    <property type="entry name" value="alpha/beta hydrolase"/>
    <property type="match status" value="1"/>
</dbReference>
<dbReference type="InterPro" id="IPR029058">
    <property type="entry name" value="AB_hydrolase_fold"/>
</dbReference>
<dbReference type="InterPro" id="IPR056304">
    <property type="entry name" value="Lip-like_C"/>
</dbReference>
<dbReference type="InterPro" id="IPR005877">
    <property type="entry name" value="YSIRK_signal_dom"/>
</dbReference>
<dbReference type="NCBIfam" id="NF047351">
    <property type="entry name" value="lipase_YSIRK_Sa"/>
    <property type="match status" value="1"/>
</dbReference>
<dbReference type="NCBIfam" id="TIGR01168">
    <property type="entry name" value="YSIRK_signal"/>
    <property type="match status" value="1"/>
</dbReference>
<dbReference type="PANTHER" id="PTHR34043">
    <property type="entry name" value="ALPHA/BETA-HYDROLASES SUPERFAMILY PROTEIN"/>
    <property type="match status" value="1"/>
</dbReference>
<dbReference type="PANTHER" id="PTHR34043:SF3">
    <property type="entry name" value="ALPHA_BETA-HYDROLASES SUPERFAMILY PROTEIN"/>
    <property type="match status" value="1"/>
</dbReference>
<dbReference type="Pfam" id="PF24708">
    <property type="entry name" value="Lip_C"/>
    <property type="match status" value="1"/>
</dbReference>
<dbReference type="Pfam" id="PF04650">
    <property type="entry name" value="YSIRK_signal"/>
    <property type="match status" value="1"/>
</dbReference>
<dbReference type="SUPFAM" id="SSF53474">
    <property type="entry name" value="alpha/beta-Hydrolases"/>
    <property type="match status" value="1"/>
</dbReference>
<dbReference type="PROSITE" id="PS00120">
    <property type="entry name" value="LIPASE_SER"/>
    <property type="match status" value="1"/>
</dbReference>
<comment type="catalytic activity">
    <reaction>
        <text>a triacylglycerol + H2O = a diacylglycerol + a fatty acid + H(+)</text>
        <dbReference type="Rhea" id="RHEA:12044"/>
        <dbReference type="ChEBI" id="CHEBI:15377"/>
        <dbReference type="ChEBI" id="CHEBI:15378"/>
        <dbReference type="ChEBI" id="CHEBI:17855"/>
        <dbReference type="ChEBI" id="CHEBI:18035"/>
        <dbReference type="ChEBI" id="CHEBI:28868"/>
        <dbReference type="EC" id="3.1.1.3"/>
    </reaction>
</comment>
<comment type="subcellular location">
    <subcellularLocation>
        <location evidence="1">Secreted</location>
    </subcellularLocation>
</comment>
<comment type="similarity">
    <text evidence="5">Belongs to the AB hydrolase superfamily. Lipase family.</text>
</comment>
<accession>Q6GCF1</accession>
<reference key="1">
    <citation type="journal article" date="2004" name="Proc. Natl. Acad. Sci. U.S.A.">
        <title>Complete genomes of two clinical Staphylococcus aureus strains: evidence for the rapid evolution of virulence and drug resistance.</title>
        <authorList>
            <person name="Holden M.T.G."/>
            <person name="Feil E.J."/>
            <person name="Lindsay J.A."/>
            <person name="Peacock S.J."/>
            <person name="Day N.P.J."/>
            <person name="Enright M.C."/>
            <person name="Foster T.J."/>
            <person name="Moore C.E."/>
            <person name="Hurst L."/>
            <person name="Atkin R."/>
            <person name="Barron A."/>
            <person name="Bason N."/>
            <person name="Bentley S.D."/>
            <person name="Chillingworth C."/>
            <person name="Chillingworth T."/>
            <person name="Churcher C."/>
            <person name="Clark L."/>
            <person name="Corton C."/>
            <person name="Cronin A."/>
            <person name="Doggett J."/>
            <person name="Dowd L."/>
            <person name="Feltwell T."/>
            <person name="Hance Z."/>
            <person name="Harris B."/>
            <person name="Hauser H."/>
            <person name="Holroyd S."/>
            <person name="Jagels K."/>
            <person name="James K.D."/>
            <person name="Lennard N."/>
            <person name="Line A."/>
            <person name="Mayes R."/>
            <person name="Moule S."/>
            <person name="Mungall K."/>
            <person name="Ormond D."/>
            <person name="Quail M.A."/>
            <person name="Rabbinowitsch E."/>
            <person name="Rutherford K.M."/>
            <person name="Sanders M."/>
            <person name="Sharp S."/>
            <person name="Simmonds M."/>
            <person name="Stevens K."/>
            <person name="Whitehead S."/>
            <person name="Barrell B.G."/>
            <person name="Spratt B.G."/>
            <person name="Parkhill J."/>
        </authorList>
    </citation>
    <scope>NUCLEOTIDE SEQUENCE [LARGE SCALE GENOMIC DNA]</scope>
    <source>
        <strain>MSSA476</strain>
    </source>
</reference>
<proteinExistence type="inferred from homology"/>
<organism>
    <name type="scientific">Staphylococcus aureus (strain MSSA476)</name>
    <dbReference type="NCBI Taxonomy" id="282459"/>
    <lineage>
        <taxon>Bacteria</taxon>
        <taxon>Bacillati</taxon>
        <taxon>Bacillota</taxon>
        <taxon>Bacilli</taxon>
        <taxon>Bacillales</taxon>
        <taxon>Staphylococcaceae</taxon>
        <taxon>Staphylococcus</taxon>
    </lineage>
</organism>
<name>LIP2_STAAS</name>
<protein>
    <recommendedName>
        <fullName>Lipase 2</fullName>
        <ecNumber>3.1.1.3</ecNumber>
    </recommendedName>
    <alternativeName>
        <fullName>Glycerol ester hydrolase 2</fullName>
    </alternativeName>
</protein>
<keyword id="KW-0106">Calcium</keyword>
<keyword id="KW-0378">Hydrolase</keyword>
<keyword id="KW-0442">Lipid degradation</keyword>
<keyword id="KW-0443">Lipid metabolism</keyword>
<keyword id="KW-0479">Metal-binding</keyword>
<keyword id="KW-0964">Secreted</keyword>
<keyword id="KW-0732">Signal</keyword>
<keyword id="KW-0865">Zymogen</keyword>
<feature type="signal peptide" evidence="2">
    <location>
        <begin position="1"/>
        <end position="37"/>
    </location>
</feature>
<feature type="propeptide" id="PRO_0000045194" evidence="1">
    <location>
        <begin position="38"/>
        <end position="295"/>
    </location>
</feature>
<feature type="chain" id="PRO_0000045195" description="Lipase 2">
    <location>
        <begin position="296"/>
        <end position="690"/>
    </location>
</feature>
<feature type="region of interest" description="Disordered" evidence="4">
    <location>
        <begin position="53"/>
        <end position="266"/>
    </location>
</feature>
<feature type="compositionally biased region" description="Polar residues" evidence="4">
    <location>
        <begin position="53"/>
        <end position="71"/>
    </location>
</feature>
<feature type="compositionally biased region" description="Basic and acidic residues" evidence="4">
    <location>
        <begin position="72"/>
        <end position="81"/>
    </location>
</feature>
<feature type="compositionally biased region" description="Polar residues" evidence="4">
    <location>
        <begin position="93"/>
        <end position="114"/>
    </location>
</feature>
<feature type="compositionally biased region" description="Polar residues" evidence="4">
    <location>
        <begin position="124"/>
        <end position="171"/>
    </location>
</feature>
<feature type="compositionally biased region" description="Polar residues" evidence="4">
    <location>
        <begin position="185"/>
        <end position="206"/>
    </location>
</feature>
<feature type="compositionally biased region" description="Basic and acidic residues" evidence="4">
    <location>
        <begin position="225"/>
        <end position="237"/>
    </location>
</feature>
<feature type="compositionally biased region" description="Basic and acidic residues" evidence="4">
    <location>
        <begin position="257"/>
        <end position="266"/>
    </location>
</feature>
<feature type="active site" description="Nucleophile" evidence="1">
    <location>
        <position position="412"/>
    </location>
</feature>
<feature type="active site" description="Charge relay system" evidence="3">
    <location>
        <position position="603"/>
    </location>
</feature>
<feature type="active site" description="Charge relay system" evidence="3">
    <location>
        <position position="645"/>
    </location>
</feature>
<feature type="binding site" evidence="1">
    <location>
        <position position="579"/>
    </location>
    <ligand>
        <name>Ca(2+)</name>
        <dbReference type="ChEBI" id="CHEBI:29108"/>
    </ligand>
</feature>
<feature type="binding site" evidence="1">
    <location>
        <position position="644"/>
    </location>
    <ligand>
        <name>Ca(2+)</name>
        <dbReference type="ChEBI" id="CHEBI:29108"/>
    </ligand>
</feature>
<feature type="binding site" evidence="1">
    <location>
        <position position="647"/>
    </location>
    <ligand>
        <name>Ca(2+)</name>
        <dbReference type="ChEBI" id="CHEBI:29108"/>
    </ligand>
</feature>
<feature type="binding site" evidence="1">
    <location>
        <position position="652"/>
    </location>
    <ligand>
        <name>Ca(2+)</name>
        <dbReference type="ChEBI" id="CHEBI:29108"/>
    </ligand>
</feature>
<feature type="binding site" evidence="1">
    <location>
        <position position="655"/>
    </location>
    <ligand>
        <name>Ca(2+)</name>
        <dbReference type="ChEBI" id="CHEBI:29108"/>
    </ligand>
</feature>